<gene>
    <name type="primary">RIX1</name>
    <name type="ordered locus">KLLA0B04092g</name>
</gene>
<evidence type="ECO:0000250" key="1">
    <source>
        <dbReference type="UniProtKB" id="P38883"/>
    </source>
</evidence>
<evidence type="ECO:0000256" key="2">
    <source>
        <dbReference type="SAM" id="MobiDB-lite"/>
    </source>
</evidence>
<evidence type="ECO:0000305" key="3"/>
<dbReference type="EMBL" id="CR382122">
    <property type="protein sequence ID" value="CAH02109.1"/>
    <property type="molecule type" value="Genomic_DNA"/>
</dbReference>
<dbReference type="RefSeq" id="XP_451716.1">
    <property type="nucleotide sequence ID" value="XM_451716.1"/>
</dbReference>
<dbReference type="SMR" id="Q6CWH3"/>
<dbReference type="FunCoup" id="Q6CWH3">
    <property type="interactions" value="349"/>
</dbReference>
<dbReference type="STRING" id="284590.Q6CWH3"/>
<dbReference type="PaxDb" id="284590-Q6CWH3"/>
<dbReference type="KEGG" id="kla:KLLA0_B04092g"/>
<dbReference type="eggNOG" id="ENOG502R65X">
    <property type="taxonomic scope" value="Eukaryota"/>
</dbReference>
<dbReference type="HOGENOM" id="CLU_020084_0_0_1"/>
<dbReference type="InParanoid" id="Q6CWH3"/>
<dbReference type="OMA" id="WCGINLI"/>
<dbReference type="Proteomes" id="UP000000598">
    <property type="component" value="Chromosome B"/>
</dbReference>
<dbReference type="GO" id="GO:0005634">
    <property type="term" value="C:nucleus"/>
    <property type="evidence" value="ECO:0007669"/>
    <property type="project" value="UniProtKB-SubCell"/>
</dbReference>
<dbReference type="GO" id="GO:0006364">
    <property type="term" value="P:rRNA processing"/>
    <property type="evidence" value="ECO:0007669"/>
    <property type="project" value="UniProtKB-KW"/>
</dbReference>
<dbReference type="InterPro" id="IPR012583">
    <property type="entry name" value="RIX1_N"/>
</dbReference>
<dbReference type="PANTHER" id="PTHR34105">
    <property type="entry name" value="PROLINE-, GLUTAMIC ACID- AND LEUCINE-RICH PROTEIN 1"/>
    <property type="match status" value="1"/>
</dbReference>
<dbReference type="PANTHER" id="PTHR34105:SF1">
    <property type="entry name" value="PROLINE-, GLUTAMIC ACID- AND LEUCINE-RICH PROTEIN 1"/>
    <property type="match status" value="1"/>
</dbReference>
<dbReference type="Pfam" id="PF08167">
    <property type="entry name" value="RIX1"/>
    <property type="match status" value="1"/>
</dbReference>
<reference key="1">
    <citation type="journal article" date="2004" name="Nature">
        <title>Genome evolution in yeasts.</title>
        <authorList>
            <person name="Dujon B."/>
            <person name="Sherman D."/>
            <person name="Fischer G."/>
            <person name="Durrens P."/>
            <person name="Casaregola S."/>
            <person name="Lafontaine I."/>
            <person name="de Montigny J."/>
            <person name="Marck C."/>
            <person name="Neuveglise C."/>
            <person name="Talla E."/>
            <person name="Goffard N."/>
            <person name="Frangeul L."/>
            <person name="Aigle M."/>
            <person name="Anthouard V."/>
            <person name="Babour A."/>
            <person name="Barbe V."/>
            <person name="Barnay S."/>
            <person name="Blanchin S."/>
            <person name="Beckerich J.-M."/>
            <person name="Beyne E."/>
            <person name="Bleykasten C."/>
            <person name="Boisrame A."/>
            <person name="Boyer J."/>
            <person name="Cattolico L."/>
            <person name="Confanioleri F."/>
            <person name="de Daruvar A."/>
            <person name="Despons L."/>
            <person name="Fabre E."/>
            <person name="Fairhead C."/>
            <person name="Ferry-Dumazet H."/>
            <person name="Groppi A."/>
            <person name="Hantraye F."/>
            <person name="Hennequin C."/>
            <person name="Jauniaux N."/>
            <person name="Joyet P."/>
            <person name="Kachouri R."/>
            <person name="Kerrest A."/>
            <person name="Koszul R."/>
            <person name="Lemaire M."/>
            <person name="Lesur I."/>
            <person name="Ma L."/>
            <person name="Muller H."/>
            <person name="Nicaud J.-M."/>
            <person name="Nikolski M."/>
            <person name="Oztas S."/>
            <person name="Ozier-Kalogeropoulos O."/>
            <person name="Pellenz S."/>
            <person name="Potier S."/>
            <person name="Richard G.-F."/>
            <person name="Straub M.-L."/>
            <person name="Suleau A."/>
            <person name="Swennen D."/>
            <person name="Tekaia F."/>
            <person name="Wesolowski-Louvel M."/>
            <person name="Westhof E."/>
            <person name="Wirth B."/>
            <person name="Zeniou-Meyer M."/>
            <person name="Zivanovic Y."/>
            <person name="Bolotin-Fukuhara M."/>
            <person name="Thierry A."/>
            <person name="Bouchier C."/>
            <person name="Caudron B."/>
            <person name="Scarpelli C."/>
            <person name="Gaillardin C."/>
            <person name="Weissenbach J."/>
            <person name="Wincker P."/>
            <person name="Souciet J.-L."/>
        </authorList>
    </citation>
    <scope>NUCLEOTIDE SEQUENCE [LARGE SCALE GENOMIC DNA]</scope>
    <source>
        <strain>ATCC 8585 / CBS 2359 / DSM 70799 / NBRC 1267 / NRRL Y-1140 / WM37</strain>
    </source>
</reference>
<accession>Q6CWH3</accession>
<proteinExistence type="inferred from homology"/>
<keyword id="KW-0539">Nucleus</keyword>
<keyword id="KW-1185">Reference proteome</keyword>
<keyword id="KW-0690">Ribosome biogenesis</keyword>
<keyword id="KW-0698">rRNA processing</keyword>
<sequence>MATVTVPLSSLAKLIEESEGSQFRSILQTLRSPTYVNQSLLKSDIGVFVAKLLKLLRSSEPYQIWKGCHAVAVLCSNNPVVLCSQANQFLTVLYTRLESFINFYVETSQSAARLTTLKTLTRTVDILMDLIRGKPTLTREALTPKLNAVIPLLMTLCQYEPELCLPILKKLLLQNTTTFKPFANKYRVILNRLITKDFQLYDRTTQRLICDNFAYLHLIKQNAQKLEENQEHHKTLMDENWRSSILSVLYQFKPLILLCGDILDFSVDSEMLNFIDSLPTPKKDTGEIKDELFAPLSVDMNESFSLWEISYRVEVLSQLLISFISLPTSFPLRIPLHGIIDICQALLMLSTNYLPLKRGLRRETELTAVIITVLRSLQYQGIVVLKSISRCYGKDILYYYSSILSSLELFIPIKARGNAIDYEKVESMKEQVFDLLSLINTLAGHLGHKIDELDLFTKLTDITLRLVEEKSNLGKFYTTVNDAKSIKQTTKQKKDYNKMAGAMSDIYSHPKQFVNKTELRWYDEANKFLSLVVQNWKLPSTQQVNIIKYATVMSITLNEQIGNIPESFEELLTTIVLYPGSERLSILPIAVGLLKNMDNKVFDVLCNPRLPFSCLLNPGSSSIRKDIRNALKMPNGDSDETEETIVTGQQDVLDQSDANGIVTANDIERDRDGPENSIEKPLSALTSIVSDESQIFRKRAVEESESEEEETKRQRPDSAEETENNGETVVIPNVPTQVLQTVETTETAQQPDSDSDSEIEIPTINVSDNDDDDDEE</sequence>
<protein>
    <recommendedName>
        <fullName>Pre-rRNA-processing protein RIX1</fullName>
    </recommendedName>
</protein>
<name>RIX1_KLULA</name>
<feature type="chain" id="PRO_0000308918" description="Pre-rRNA-processing protein RIX1">
    <location>
        <begin position="1"/>
        <end position="776"/>
    </location>
</feature>
<feature type="region of interest" description="Disordered" evidence="2">
    <location>
        <begin position="699"/>
        <end position="776"/>
    </location>
</feature>
<feature type="compositionally biased region" description="Low complexity" evidence="2">
    <location>
        <begin position="736"/>
        <end position="750"/>
    </location>
</feature>
<organism>
    <name type="scientific">Kluyveromyces lactis (strain ATCC 8585 / CBS 2359 / DSM 70799 / NBRC 1267 / NRRL Y-1140 / WM37)</name>
    <name type="common">Yeast</name>
    <name type="synonym">Candida sphaerica</name>
    <dbReference type="NCBI Taxonomy" id="284590"/>
    <lineage>
        <taxon>Eukaryota</taxon>
        <taxon>Fungi</taxon>
        <taxon>Dikarya</taxon>
        <taxon>Ascomycota</taxon>
        <taxon>Saccharomycotina</taxon>
        <taxon>Saccharomycetes</taxon>
        <taxon>Saccharomycetales</taxon>
        <taxon>Saccharomycetaceae</taxon>
        <taxon>Kluyveromyces</taxon>
    </lineage>
</organism>
<comment type="function">
    <text evidence="1">Component of the RIX1 complex required for processing of ITS2 sequences from 35S pre-rRNA and the nucleoplasmic transit of the pre-60S ribosomal subunits. Regulates pre-60S association of the critical remodeling factor MDN1.</text>
</comment>
<comment type="subunit">
    <text evidence="1">Component of the RIX1 complex, composed of IPI1, RIX1/IPI2 and IPI3 in a 1:2:2 stoichiometry. The complex interacts (via RIX1) with MDN1 (via its hexameric AAA ATPase ring) and the pre-60S ribosome particles.</text>
</comment>
<comment type="subcellular location">
    <subcellularLocation>
        <location evidence="1">Nucleus</location>
    </subcellularLocation>
</comment>
<comment type="similarity">
    <text evidence="3">Belongs to the RIX1/PELP1 family.</text>
</comment>